<organism>
    <name type="scientific">Pseudechis australis</name>
    <name type="common">Mulga snake</name>
    <name type="synonym">King brown snake</name>
    <dbReference type="NCBI Taxonomy" id="8670"/>
    <lineage>
        <taxon>Eukaryota</taxon>
        <taxon>Metazoa</taxon>
        <taxon>Chordata</taxon>
        <taxon>Craniata</taxon>
        <taxon>Vertebrata</taxon>
        <taxon>Euteleostomi</taxon>
        <taxon>Lepidosauria</taxon>
        <taxon>Squamata</taxon>
        <taxon>Bifurcata</taxon>
        <taxon>Unidentata</taxon>
        <taxon>Episquamata</taxon>
        <taxon>Toxicofera</taxon>
        <taxon>Serpentes</taxon>
        <taxon>Colubroidea</taxon>
        <taxon>Elapidae</taxon>
        <taxon>Hydrophiinae</taxon>
        <taxon>Pseudechis</taxon>
    </lineage>
</organism>
<keyword id="KW-0165">Cleavage on pair of basic residues</keyword>
<keyword id="KW-1015">Disulfide bond</keyword>
<keyword id="KW-0339">Growth factor</keyword>
<keyword id="KW-0446">Lipid-binding</keyword>
<keyword id="KW-0481">Metalloenzyme inhibitor</keyword>
<keyword id="KW-0483">Metalloprotease inhibitor</keyword>
<keyword id="KW-0646">Protease inhibitor</keyword>
<keyword id="KW-0964">Secreted</keyword>
<keyword id="KW-0732">Signal</keyword>
<keyword id="KW-0800">Toxin</keyword>
<evidence type="ECO:0000250" key="1"/>
<evidence type="ECO:0000250" key="2">
    <source>
        <dbReference type="UniProtKB" id="P61898"/>
    </source>
</evidence>
<evidence type="ECO:0000250" key="3">
    <source>
        <dbReference type="UniProtKB" id="P61899"/>
    </source>
</evidence>
<evidence type="ECO:0000255" key="4"/>
<evidence type="ECO:0000256" key="5">
    <source>
        <dbReference type="SAM" id="MobiDB-lite"/>
    </source>
</evidence>
<evidence type="ECO:0000305" key="6"/>
<feature type="signal peptide" evidence="4">
    <location>
        <begin position="1"/>
        <end position="18"/>
    </location>
</feature>
<feature type="propeptide" id="PRO_0000043306" evidence="1">
    <location>
        <begin position="19"/>
        <end position="125"/>
    </location>
</feature>
<feature type="chain" id="PRO_0000043307" description="Venom nerve growth factor 2">
    <location>
        <begin position="126"/>
        <end position="242"/>
    </location>
</feature>
<feature type="region of interest" description="Disordered" evidence="5">
    <location>
        <begin position="47"/>
        <end position="70"/>
    </location>
</feature>
<feature type="compositionally biased region" description="Basic and acidic residues" evidence="5">
    <location>
        <begin position="47"/>
        <end position="66"/>
    </location>
</feature>
<feature type="disulfide bond" evidence="2">
    <location>
        <begin position="139"/>
        <end position="203"/>
    </location>
</feature>
<feature type="disulfide bond" evidence="2">
    <location>
        <begin position="181"/>
        <end position="231"/>
    </location>
</feature>
<feature type="disulfide bond" evidence="2">
    <location>
        <begin position="191"/>
        <end position="233"/>
    </location>
</feature>
<protein>
    <recommendedName>
        <fullName>Venom nerve growth factor 2</fullName>
        <shortName>v-NGF-2</shortName>
        <shortName>vNGF-2</shortName>
    </recommendedName>
</protein>
<accession>Q3HXY2</accession>
<sequence length="242" mass="27207">MSMLCYTLIIAFLIGIWAAPQSEDNVPLGSPATSDLSDTSCAQTHEDLKTSRNTDQRHPAPKKADDQELGSAANIIVDPKLFQKRQFQSSRVLFSTQPPPLSRDEQSVEFLDNEDALNRNIQAKRQNHPVHDLGEHSVCDSISEWVTKTTATDIKGNTVTVKVDVNLNNHVYKQYFFETKCRNPNPVPSGCRGIDSRLWTSYCTKTQTFVRALTMEGNQASWRFIRIDTACVCVITKKTDNL</sequence>
<reference key="1">
    <citation type="submission" date="2005-08" db="EMBL/GenBank/DDBJ databases">
        <title>Identification of nerve growth factor as a ubiquitous component of Australian elapid snake venoms.</title>
        <authorList>
            <person name="Earl S.T.H."/>
            <person name="St Pierre L."/>
            <person name="Birrell G.W."/>
            <person name="Wallis T.P."/>
            <person name="Masci P.P."/>
            <person name="de Jersey J."/>
            <person name="Gorman J.J."/>
            <person name="Lavin M.F."/>
        </authorList>
    </citation>
    <scope>NUCLEOTIDE SEQUENCE [MRNA]</scope>
    <source>
        <tissue>Venom gland</tissue>
    </source>
</reference>
<comment type="function">
    <text evidence="2 3">Nerve growth factor is important for the development and maintenance of the sympathetic and sensory nervous systems. It stimulates division and differentiation of sympathetic and embryonic sensory neurons as well as basal forebrain cholinergic neurons in the brain. Its relevance in the snake venom is not clear. However, it has been shown to inhibit metalloproteinase-dependent proteolysis of platelet glycoprotein Ib alpha, suggesting a metalloproteinase inhibition to prevent metalloprotease autodigestion and/or protection against prey proteases (By similarity). Binds a lipid between the two protein chains in the homodimer. The lipid-bound form promotes histamine relase from mouse mast cells, contrary to the lipid-free form (By similarity).</text>
</comment>
<comment type="subunit">
    <text evidence="2">Homodimer; non-covalently linked.</text>
</comment>
<comment type="subcellular location">
    <subcellularLocation>
        <location evidence="2">Secreted</location>
    </subcellularLocation>
</comment>
<comment type="tissue specificity">
    <text>Expressed by the venom gland.</text>
</comment>
<comment type="similarity">
    <text evidence="6">Belongs to the NGF-beta family.</text>
</comment>
<dbReference type="EMBL" id="DQ181913">
    <property type="protein sequence ID" value="ABA60125.1"/>
    <property type="molecule type" value="mRNA"/>
</dbReference>
<dbReference type="SMR" id="Q3HXY2"/>
<dbReference type="GO" id="GO:0030424">
    <property type="term" value="C:axon"/>
    <property type="evidence" value="ECO:0007669"/>
    <property type="project" value="TreeGrafter"/>
</dbReference>
<dbReference type="GO" id="GO:0030425">
    <property type="term" value="C:dendrite"/>
    <property type="evidence" value="ECO:0007669"/>
    <property type="project" value="TreeGrafter"/>
</dbReference>
<dbReference type="GO" id="GO:0005615">
    <property type="term" value="C:extracellular space"/>
    <property type="evidence" value="ECO:0007669"/>
    <property type="project" value="TreeGrafter"/>
</dbReference>
<dbReference type="GO" id="GO:0008021">
    <property type="term" value="C:synaptic vesicle"/>
    <property type="evidence" value="ECO:0007669"/>
    <property type="project" value="TreeGrafter"/>
</dbReference>
<dbReference type="GO" id="GO:0008083">
    <property type="term" value="F:growth factor activity"/>
    <property type="evidence" value="ECO:0007669"/>
    <property type="project" value="UniProtKB-KW"/>
</dbReference>
<dbReference type="GO" id="GO:0008289">
    <property type="term" value="F:lipid binding"/>
    <property type="evidence" value="ECO:0007669"/>
    <property type="project" value="UniProtKB-KW"/>
</dbReference>
<dbReference type="GO" id="GO:0008191">
    <property type="term" value="F:metalloendopeptidase inhibitor activity"/>
    <property type="evidence" value="ECO:0000250"/>
    <property type="project" value="UniProtKB"/>
</dbReference>
<dbReference type="GO" id="GO:0005163">
    <property type="term" value="F:nerve growth factor receptor binding"/>
    <property type="evidence" value="ECO:0007669"/>
    <property type="project" value="TreeGrafter"/>
</dbReference>
<dbReference type="GO" id="GO:0090729">
    <property type="term" value="F:toxin activity"/>
    <property type="evidence" value="ECO:0007669"/>
    <property type="project" value="UniProtKB-KW"/>
</dbReference>
<dbReference type="GO" id="GO:0007169">
    <property type="term" value="P:cell surface receptor protein tyrosine kinase signaling pathway"/>
    <property type="evidence" value="ECO:0007669"/>
    <property type="project" value="TreeGrafter"/>
</dbReference>
<dbReference type="GO" id="GO:0050804">
    <property type="term" value="P:modulation of chemical synaptic transmission"/>
    <property type="evidence" value="ECO:0007669"/>
    <property type="project" value="TreeGrafter"/>
</dbReference>
<dbReference type="GO" id="GO:0043524">
    <property type="term" value="P:negative regulation of neuron apoptotic process"/>
    <property type="evidence" value="ECO:0007669"/>
    <property type="project" value="TreeGrafter"/>
</dbReference>
<dbReference type="GO" id="GO:0021675">
    <property type="term" value="P:nerve development"/>
    <property type="evidence" value="ECO:0007669"/>
    <property type="project" value="TreeGrafter"/>
</dbReference>
<dbReference type="GO" id="GO:0038180">
    <property type="term" value="P:nerve growth factor signaling pathway"/>
    <property type="evidence" value="ECO:0007669"/>
    <property type="project" value="TreeGrafter"/>
</dbReference>
<dbReference type="GO" id="GO:0048812">
    <property type="term" value="P:neuron projection morphogenesis"/>
    <property type="evidence" value="ECO:0007669"/>
    <property type="project" value="TreeGrafter"/>
</dbReference>
<dbReference type="FunFam" id="2.10.90.10:FF:000002">
    <property type="entry name" value="Brain-derived neurotrophic factor"/>
    <property type="match status" value="1"/>
</dbReference>
<dbReference type="Gene3D" id="2.10.90.10">
    <property type="entry name" value="Cystine-knot cytokines"/>
    <property type="match status" value="1"/>
</dbReference>
<dbReference type="InterPro" id="IPR029034">
    <property type="entry name" value="Cystine-knot_cytokine"/>
</dbReference>
<dbReference type="InterPro" id="IPR020408">
    <property type="entry name" value="Nerve_growth_factor-like"/>
</dbReference>
<dbReference type="InterPro" id="IPR002072">
    <property type="entry name" value="Nerve_growth_factor-rel"/>
</dbReference>
<dbReference type="InterPro" id="IPR020425">
    <property type="entry name" value="Nerve_growth_factor_bsu"/>
</dbReference>
<dbReference type="InterPro" id="IPR019846">
    <property type="entry name" value="Nerve_growth_factor_CS"/>
</dbReference>
<dbReference type="InterPro" id="IPR020433">
    <property type="entry name" value="Venom_nerve_growth_factor"/>
</dbReference>
<dbReference type="PANTHER" id="PTHR11589:SF10">
    <property type="entry name" value="BETA-NERVE GROWTH FACTOR"/>
    <property type="match status" value="1"/>
</dbReference>
<dbReference type="PANTHER" id="PTHR11589">
    <property type="entry name" value="NERVE GROWTH FACTOR NGF -RELATED"/>
    <property type="match status" value="1"/>
</dbReference>
<dbReference type="Pfam" id="PF00243">
    <property type="entry name" value="NGF"/>
    <property type="match status" value="1"/>
</dbReference>
<dbReference type="PIRSF" id="PIRSF001789">
    <property type="entry name" value="NGF"/>
    <property type="match status" value="1"/>
</dbReference>
<dbReference type="PRINTS" id="PR00268">
    <property type="entry name" value="NGF"/>
</dbReference>
<dbReference type="PRINTS" id="PR01913">
    <property type="entry name" value="NGFBETA"/>
</dbReference>
<dbReference type="PRINTS" id="PR01917">
    <property type="entry name" value="VENOMNGF"/>
</dbReference>
<dbReference type="SMART" id="SM00140">
    <property type="entry name" value="NGF"/>
    <property type="match status" value="1"/>
</dbReference>
<dbReference type="SUPFAM" id="SSF57501">
    <property type="entry name" value="Cystine-knot cytokines"/>
    <property type="match status" value="1"/>
</dbReference>
<dbReference type="PROSITE" id="PS00248">
    <property type="entry name" value="NGF_1"/>
    <property type="match status" value="1"/>
</dbReference>
<dbReference type="PROSITE" id="PS50270">
    <property type="entry name" value="NGF_2"/>
    <property type="match status" value="1"/>
</dbReference>
<name>NGFV2_PSEAU</name>
<proteinExistence type="evidence at transcript level"/>